<keyword id="KW-0963">Cytoplasm</keyword>
<keyword id="KW-0238">DNA-binding</keyword>
<keyword id="KW-0678">Repressor</keyword>
<keyword id="KW-0804">Transcription</keyword>
<keyword id="KW-0805">Transcription regulation</keyword>
<name>CODY_LISMH</name>
<accession>B8DG51</accession>
<reference key="1">
    <citation type="journal article" date="2011" name="J. Bacteriol.">
        <title>Genome sequence of lineage III Listeria monocytogenes strain HCC23.</title>
        <authorList>
            <person name="Steele C.L."/>
            <person name="Donaldson J.R."/>
            <person name="Paul D."/>
            <person name="Banes M.M."/>
            <person name="Arick T."/>
            <person name="Bridges S.M."/>
            <person name="Lawrence M.L."/>
        </authorList>
    </citation>
    <scope>NUCLEOTIDE SEQUENCE [LARGE SCALE GENOMIC DNA]</scope>
    <source>
        <strain>HCC23</strain>
    </source>
</reference>
<comment type="function">
    <text evidence="1">DNA-binding global transcriptional regulator which is involved in the adaptive response to starvation and acts by directly or indirectly controlling the expression of numerous genes in response to nutrient availability. During rapid exponential growth, CodY is highly active and represses genes whose products allow adaptation to nutrient depletion.</text>
</comment>
<comment type="subcellular location">
    <subcellularLocation>
        <location evidence="1">Cytoplasm</location>
    </subcellularLocation>
</comment>
<comment type="similarity">
    <text evidence="1">Belongs to the CodY family.</text>
</comment>
<evidence type="ECO:0000255" key="1">
    <source>
        <dbReference type="HAMAP-Rule" id="MF_00621"/>
    </source>
</evidence>
<sequence length="259" mass="28745">MTLLEKTRKINAMLQNAAGKTVNFKEMADTLTDVIEANTYIVSRKGKLLGYSEALPIENDRMKQMLTERQFPEEYTQSLFNVGETSSNLEVSSQYTAFPIENSELFTKGLTTIVPIVGGGERLGTLILSRLESNFTDDDLLLAEYGGTVVGMEILHEKAEEIEEEARSRAVVQMAISSLSYSELEAIEHIFDELNGKEGLLVASKIADRVGITRSVIVNALRKLESAGVIDSRSLGMKGTFIRVLNDKFLVELEKLKNN</sequence>
<protein>
    <recommendedName>
        <fullName evidence="1">Global transcriptional regulator CodY</fullName>
    </recommendedName>
</protein>
<feature type="chain" id="PRO_1000147205" description="Global transcriptional regulator CodY">
    <location>
        <begin position="1"/>
        <end position="259"/>
    </location>
</feature>
<feature type="DNA-binding region" description="H-T-H motif" evidence="1">
    <location>
        <begin position="203"/>
        <end position="222"/>
    </location>
</feature>
<feature type="region of interest" description="GAF domain" evidence="1">
    <location>
        <begin position="1"/>
        <end position="155"/>
    </location>
</feature>
<gene>
    <name evidence="1" type="primary">codY</name>
    <name type="ordered locus">LMHCC_1295</name>
</gene>
<organism>
    <name type="scientific">Listeria monocytogenes serotype 4a (strain HCC23)</name>
    <dbReference type="NCBI Taxonomy" id="552536"/>
    <lineage>
        <taxon>Bacteria</taxon>
        <taxon>Bacillati</taxon>
        <taxon>Bacillota</taxon>
        <taxon>Bacilli</taxon>
        <taxon>Bacillales</taxon>
        <taxon>Listeriaceae</taxon>
        <taxon>Listeria</taxon>
    </lineage>
</organism>
<proteinExistence type="inferred from homology"/>
<dbReference type="EMBL" id="CP001175">
    <property type="protein sequence ID" value="ACK39641.1"/>
    <property type="molecule type" value="Genomic_DNA"/>
</dbReference>
<dbReference type="RefSeq" id="WP_003726695.1">
    <property type="nucleotide sequence ID" value="NC_011660.1"/>
</dbReference>
<dbReference type="SMR" id="B8DG51"/>
<dbReference type="GeneID" id="93239154"/>
<dbReference type="KEGG" id="lmh:LMHCC_1295"/>
<dbReference type="HOGENOM" id="CLU_089581_0_0_9"/>
<dbReference type="GO" id="GO:0005737">
    <property type="term" value="C:cytoplasm"/>
    <property type="evidence" value="ECO:0007669"/>
    <property type="project" value="UniProtKB-SubCell"/>
</dbReference>
<dbReference type="GO" id="GO:0003677">
    <property type="term" value="F:DNA binding"/>
    <property type="evidence" value="ECO:0007669"/>
    <property type="project" value="UniProtKB-UniRule"/>
</dbReference>
<dbReference type="GO" id="GO:0003700">
    <property type="term" value="F:DNA-binding transcription factor activity"/>
    <property type="evidence" value="ECO:0007669"/>
    <property type="project" value="InterPro"/>
</dbReference>
<dbReference type="GO" id="GO:0005525">
    <property type="term" value="F:GTP binding"/>
    <property type="evidence" value="ECO:0007669"/>
    <property type="project" value="InterPro"/>
</dbReference>
<dbReference type="GO" id="GO:0045892">
    <property type="term" value="P:negative regulation of DNA-templated transcription"/>
    <property type="evidence" value="ECO:0007669"/>
    <property type="project" value="UniProtKB-UniRule"/>
</dbReference>
<dbReference type="FunFam" id="1.10.10.10:FF:000034">
    <property type="entry name" value="GTP-sensing transcriptional pleiotropic repressor CodY"/>
    <property type="match status" value="1"/>
</dbReference>
<dbReference type="FunFam" id="3.30.450.40:FF:000003">
    <property type="entry name" value="GTP-sensing transcriptional pleiotropic repressor CodY"/>
    <property type="match status" value="1"/>
</dbReference>
<dbReference type="Gene3D" id="3.30.450.40">
    <property type="match status" value="1"/>
</dbReference>
<dbReference type="Gene3D" id="1.10.10.10">
    <property type="entry name" value="Winged helix-like DNA-binding domain superfamily/Winged helix DNA-binding domain"/>
    <property type="match status" value="1"/>
</dbReference>
<dbReference type="HAMAP" id="MF_00621">
    <property type="entry name" value="HTH_type_CodY"/>
    <property type="match status" value="1"/>
</dbReference>
<dbReference type="InterPro" id="IPR014154">
    <property type="entry name" value="CodY"/>
</dbReference>
<dbReference type="InterPro" id="IPR029016">
    <property type="entry name" value="GAF-like_dom_sf"/>
</dbReference>
<dbReference type="InterPro" id="IPR013198">
    <property type="entry name" value="GTP_trans_reg_CodY_C"/>
</dbReference>
<dbReference type="InterPro" id="IPR010312">
    <property type="entry name" value="Transc_reg_CodY_N"/>
</dbReference>
<dbReference type="InterPro" id="IPR036388">
    <property type="entry name" value="WH-like_DNA-bd_sf"/>
</dbReference>
<dbReference type="InterPro" id="IPR036390">
    <property type="entry name" value="WH_DNA-bd_sf"/>
</dbReference>
<dbReference type="NCBIfam" id="TIGR02787">
    <property type="entry name" value="codY_Gpos"/>
    <property type="match status" value="1"/>
</dbReference>
<dbReference type="NCBIfam" id="NF003170">
    <property type="entry name" value="PRK04158.1"/>
    <property type="match status" value="1"/>
</dbReference>
<dbReference type="PANTHER" id="PTHR40062:SF1">
    <property type="entry name" value="GLOBAL TRANSCRIPTIONAL REGULATOR CODY"/>
    <property type="match status" value="1"/>
</dbReference>
<dbReference type="PANTHER" id="PTHR40062">
    <property type="entry name" value="GTP-SENSING TRANSCRIPTIONAL PLEIOTROPIC REPRESSOR CODY"/>
    <property type="match status" value="1"/>
</dbReference>
<dbReference type="Pfam" id="PF06018">
    <property type="entry name" value="CodY"/>
    <property type="match status" value="1"/>
</dbReference>
<dbReference type="Pfam" id="PF08222">
    <property type="entry name" value="HTH_CodY"/>
    <property type="match status" value="1"/>
</dbReference>
<dbReference type="PIRSF" id="PIRSF011572">
    <property type="entry name" value="GTP_sensing_CodY"/>
    <property type="match status" value="1"/>
</dbReference>
<dbReference type="SUPFAM" id="SSF46785">
    <property type="entry name" value="Winged helix' DNA-binding domain"/>
    <property type="match status" value="1"/>
</dbReference>